<accession>B2VBT9</accession>
<name>BIOB_ERWT9</name>
<reference key="1">
    <citation type="journal article" date="2008" name="Environ. Microbiol.">
        <title>The genome of Erwinia tasmaniensis strain Et1/99, a non-pathogenic bacterium in the genus Erwinia.</title>
        <authorList>
            <person name="Kube M."/>
            <person name="Migdoll A.M."/>
            <person name="Mueller I."/>
            <person name="Kuhl H."/>
            <person name="Beck A."/>
            <person name="Reinhardt R."/>
            <person name="Geider K."/>
        </authorList>
    </citation>
    <scope>NUCLEOTIDE SEQUENCE [LARGE SCALE GENOMIC DNA]</scope>
    <source>
        <strain>DSM 17950 / CFBP 7177 / CIP 109463 / NCPPB 4357 / Et1/99</strain>
    </source>
</reference>
<dbReference type="EC" id="2.8.1.6" evidence="1"/>
<dbReference type="EMBL" id="CU468135">
    <property type="protein sequence ID" value="CAO97312.1"/>
    <property type="molecule type" value="Genomic_DNA"/>
</dbReference>
<dbReference type="RefSeq" id="WP_012441981.1">
    <property type="nucleotide sequence ID" value="NC_010694.1"/>
</dbReference>
<dbReference type="SMR" id="B2VBT9"/>
<dbReference type="STRING" id="465817.ETA_22660"/>
<dbReference type="KEGG" id="eta:ETA_22660"/>
<dbReference type="eggNOG" id="COG0502">
    <property type="taxonomic scope" value="Bacteria"/>
</dbReference>
<dbReference type="HOGENOM" id="CLU_033172_1_2_6"/>
<dbReference type="OrthoDB" id="9786826at2"/>
<dbReference type="UniPathway" id="UPA00078">
    <property type="reaction ID" value="UER00162"/>
</dbReference>
<dbReference type="Proteomes" id="UP000001726">
    <property type="component" value="Chromosome"/>
</dbReference>
<dbReference type="GO" id="GO:0051537">
    <property type="term" value="F:2 iron, 2 sulfur cluster binding"/>
    <property type="evidence" value="ECO:0007669"/>
    <property type="project" value="UniProtKB-KW"/>
</dbReference>
<dbReference type="GO" id="GO:0051539">
    <property type="term" value="F:4 iron, 4 sulfur cluster binding"/>
    <property type="evidence" value="ECO:0007669"/>
    <property type="project" value="UniProtKB-KW"/>
</dbReference>
<dbReference type="GO" id="GO:0004076">
    <property type="term" value="F:biotin synthase activity"/>
    <property type="evidence" value="ECO:0007669"/>
    <property type="project" value="UniProtKB-UniRule"/>
</dbReference>
<dbReference type="GO" id="GO:0005506">
    <property type="term" value="F:iron ion binding"/>
    <property type="evidence" value="ECO:0007669"/>
    <property type="project" value="UniProtKB-UniRule"/>
</dbReference>
<dbReference type="GO" id="GO:0009102">
    <property type="term" value="P:biotin biosynthetic process"/>
    <property type="evidence" value="ECO:0007669"/>
    <property type="project" value="UniProtKB-UniRule"/>
</dbReference>
<dbReference type="CDD" id="cd01335">
    <property type="entry name" value="Radical_SAM"/>
    <property type="match status" value="1"/>
</dbReference>
<dbReference type="FunFam" id="3.20.20.70:FF:000011">
    <property type="entry name" value="Biotin synthase"/>
    <property type="match status" value="1"/>
</dbReference>
<dbReference type="Gene3D" id="3.20.20.70">
    <property type="entry name" value="Aldolase class I"/>
    <property type="match status" value="1"/>
</dbReference>
<dbReference type="HAMAP" id="MF_01694">
    <property type="entry name" value="BioB"/>
    <property type="match status" value="1"/>
</dbReference>
<dbReference type="InterPro" id="IPR013785">
    <property type="entry name" value="Aldolase_TIM"/>
</dbReference>
<dbReference type="InterPro" id="IPR010722">
    <property type="entry name" value="BATS_dom"/>
</dbReference>
<dbReference type="InterPro" id="IPR002684">
    <property type="entry name" value="Biotin_synth/BioAB"/>
</dbReference>
<dbReference type="InterPro" id="IPR024177">
    <property type="entry name" value="Biotin_synthase"/>
</dbReference>
<dbReference type="InterPro" id="IPR006638">
    <property type="entry name" value="Elp3/MiaA/NifB-like_rSAM"/>
</dbReference>
<dbReference type="InterPro" id="IPR007197">
    <property type="entry name" value="rSAM"/>
</dbReference>
<dbReference type="NCBIfam" id="TIGR00433">
    <property type="entry name" value="bioB"/>
    <property type="match status" value="1"/>
</dbReference>
<dbReference type="PANTHER" id="PTHR22976">
    <property type="entry name" value="BIOTIN SYNTHASE"/>
    <property type="match status" value="1"/>
</dbReference>
<dbReference type="PANTHER" id="PTHR22976:SF2">
    <property type="entry name" value="BIOTIN SYNTHASE, MITOCHONDRIAL"/>
    <property type="match status" value="1"/>
</dbReference>
<dbReference type="Pfam" id="PF06968">
    <property type="entry name" value="BATS"/>
    <property type="match status" value="1"/>
</dbReference>
<dbReference type="Pfam" id="PF04055">
    <property type="entry name" value="Radical_SAM"/>
    <property type="match status" value="1"/>
</dbReference>
<dbReference type="PIRSF" id="PIRSF001619">
    <property type="entry name" value="Biotin_synth"/>
    <property type="match status" value="1"/>
</dbReference>
<dbReference type="SFLD" id="SFLDF00272">
    <property type="entry name" value="biotin_synthase"/>
    <property type="match status" value="1"/>
</dbReference>
<dbReference type="SFLD" id="SFLDS00029">
    <property type="entry name" value="Radical_SAM"/>
    <property type="match status" value="1"/>
</dbReference>
<dbReference type="SMART" id="SM00876">
    <property type="entry name" value="BATS"/>
    <property type="match status" value="1"/>
</dbReference>
<dbReference type="SMART" id="SM00729">
    <property type="entry name" value="Elp3"/>
    <property type="match status" value="1"/>
</dbReference>
<dbReference type="SUPFAM" id="SSF102114">
    <property type="entry name" value="Radical SAM enzymes"/>
    <property type="match status" value="1"/>
</dbReference>
<dbReference type="PROSITE" id="PS51918">
    <property type="entry name" value="RADICAL_SAM"/>
    <property type="match status" value="1"/>
</dbReference>
<gene>
    <name evidence="1" type="primary">bioB</name>
    <name type="ordered locus">ETA_22660</name>
</gene>
<keyword id="KW-0001">2Fe-2S</keyword>
<keyword id="KW-0004">4Fe-4S</keyword>
<keyword id="KW-0093">Biotin biosynthesis</keyword>
<keyword id="KW-0408">Iron</keyword>
<keyword id="KW-0411">Iron-sulfur</keyword>
<keyword id="KW-0479">Metal-binding</keyword>
<keyword id="KW-1185">Reference proteome</keyword>
<keyword id="KW-0949">S-adenosyl-L-methionine</keyword>
<keyword id="KW-0808">Transferase</keyword>
<feature type="chain" id="PRO_0000381381" description="Biotin synthase">
    <location>
        <begin position="1"/>
        <end position="343"/>
    </location>
</feature>
<feature type="domain" description="Radical SAM core" evidence="2">
    <location>
        <begin position="36"/>
        <end position="254"/>
    </location>
</feature>
<feature type="binding site" evidence="1">
    <location>
        <position position="51"/>
    </location>
    <ligand>
        <name>[4Fe-4S] cluster</name>
        <dbReference type="ChEBI" id="CHEBI:49883"/>
        <note>4Fe-4S-S-AdoMet</note>
    </ligand>
</feature>
<feature type="binding site" evidence="1">
    <location>
        <position position="55"/>
    </location>
    <ligand>
        <name>[4Fe-4S] cluster</name>
        <dbReference type="ChEBI" id="CHEBI:49883"/>
        <note>4Fe-4S-S-AdoMet</note>
    </ligand>
</feature>
<feature type="binding site" evidence="1">
    <location>
        <position position="58"/>
    </location>
    <ligand>
        <name>[4Fe-4S] cluster</name>
        <dbReference type="ChEBI" id="CHEBI:49883"/>
        <note>4Fe-4S-S-AdoMet</note>
    </ligand>
</feature>
<feature type="binding site" evidence="1">
    <location>
        <position position="95"/>
    </location>
    <ligand>
        <name>[2Fe-2S] cluster</name>
        <dbReference type="ChEBI" id="CHEBI:190135"/>
    </ligand>
</feature>
<feature type="binding site" evidence="1">
    <location>
        <position position="126"/>
    </location>
    <ligand>
        <name>[2Fe-2S] cluster</name>
        <dbReference type="ChEBI" id="CHEBI:190135"/>
    </ligand>
</feature>
<feature type="binding site" evidence="1">
    <location>
        <position position="186"/>
    </location>
    <ligand>
        <name>[2Fe-2S] cluster</name>
        <dbReference type="ChEBI" id="CHEBI:190135"/>
    </ligand>
</feature>
<feature type="binding site" evidence="1">
    <location>
        <position position="258"/>
    </location>
    <ligand>
        <name>[2Fe-2S] cluster</name>
        <dbReference type="ChEBI" id="CHEBI:190135"/>
    </ligand>
</feature>
<evidence type="ECO:0000255" key="1">
    <source>
        <dbReference type="HAMAP-Rule" id="MF_01694"/>
    </source>
</evidence>
<evidence type="ECO:0000255" key="2">
    <source>
        <dbReference type="PROSITE-ProRule" id="PRU01266"/>
    </source>
</evidence>
<protein>
    <recommendedName>
        <fullName evidence="1">Biotin synthase</fullName>
        <ecNumber evidence="1">2.8.1.6</ecNumber>
    </recommendedName>
</protein>
<sequence>MATRWTLSQAQALFETPFLELMFEAQQIHRHYFDPRQVQVSTLLSIKTGACPEDCKYCPQSARYKTGLEAERLMEVEEVLSSARKAKAAGSGRFCMGAAWKNPHERDMPYLEKMVQGVKEMGMETCMTLGSLSEQQAQRLAHAGLDFYNHNLDTSPEFYGSIITTRSYQERLDTLGKVREAGIKVCSGGIVGLGETVQDRAGLLVQLANLPEPPESVPINMLVKVKGTPMADNDDVDPFDFVRTIAVARIMMPRSHVRLSAGREQMSEQTQAMCFMAGANSIFYGCKLLTTPNPDEDKDLLLFRKLGLNPRHGTTESGDNAQQQALAAQLLSADTEQFYNAAR</sequence>
<comment type="function">
    <text evidence="1">Catalyzes the conversion of dethiobiotin (DTB) to biotin by the insertion of a sulfur atom into dethiobiotin via a radical-based mechanism.</text>
</comment>
<comment type="catalytic activity">
    <reaction evidence="1">
        <text>(4R,5S)-dethiobiotin + (sulfur carrier)-SH + 2 reduced [2Fe-2S]-[ferredoxin] + 2 S-adenosyl-L-methionine = (sulfur carrier)-H + biotin + 2 5'-deoxyadenosine + 2 L-methionine + 2 oxidized [2Fe-2S]-[ferredoxin]</text>
        <dbReference type="Rhea" id="RHEA:22060"/>
        <dbReference type="Rhea" id="RHEA-COMP:10000"/>
        <dbReference type="Rhea" id="RHEA-COMP:10001"/>
        <dbReference type="Rhea" id="RHEA-COMP:14737"/>
        <dbReference type="Rhea" id="RHEA-COMP:14739"/>
        <dbReference type="ChEBI" id="CHEBI:17319"/>
        <dbReference type="ChEBI" id="CHEBI:29917"/>
        <dbReference type="ChEBI" id="CHEBI:33737"/>
        <dbReference type="ChEBI" id="CHEBI:33738"/>
        <dbReference type="ChEBI" id="CHEBI:57586"/>
        <dbReference type="ChEBI" id="CHEBI:57844"/>
        <dbReference type="ChEBI" id="CHEBI:59789"/>
        <dbReference type="ChEBI" id="CHEBI:64428"/>
        <dbReference type="ChEBI" id="CHEBI:149473"/>
        <dbReference type="EC" id="2.8.1.6"/>
    </reaction>
</comment>
<comment type="cofactor">
    <cofactor evidence="1">
        <name>[4Fe-4S] cluster</name>
        <dbReference type="ChEBI" id="CHEBI:49883"/>
    </cofactor>
    <text evidence="1">Binds 1 [4Fe-4S] cluster. The cluster is coordinated with 3 cysteines and an exchangeable S-adenosyl-L-methionine.</text>
</comment>
<comment type="cofactor">
    <cofactor evidence="1">
        <name>[2Fe-2S] cluster</name>
        <dbReference type="ChEBI" id="CHEBI:190135"/>
    </cofactor>
    <text evidence="1">Binds 1 [2Fe-2S] cluster. The cluster is coordinated with 3 cysteines and 1 arginine.</text>
</comment>
<comment type="pathway">
    <text evidence="1">Cofactor biosynthesis; biotin biosynthesis; biotin from 7,8-diaminononanoate: step 2/2.</text>
</comment>
<comment type="subunit">
    <text evidence="1">Homodimer.</text>
</comment>
<comment type="similarity">
    <text evidence="1">Belongs to the radical SAM superfamily. Biotin synthase family.</text>
</comment>
<organism>
    <name type="scientific">Erwinia tasmaniensis (strain DSM 17950 / CFBP 7177 / CIP 109463 / NCPPB 4357 / Et1/99)</name>
    <dbReference type="NCBI Taxonomy" id="465817"/>
    <lineage>
        <taxon>Bacteria</taxon>
        <taxon>Pseudomonadati</taxon>
        <taxon>Pseudomonadota</taxon>
        <taxon>Gammaproteobacteria</taxon>
        <taxon>Enterobacterales</taxon>
        <taxon>Erwiniaceae</taxon>
        <taxon>Erwinia</taxon>
    </lineage>
</organism>
<proteinExistence type="inferred from homology"/>